<evidence type="ECO:0000255" key="1"/>
<evidence type="ECO:0000269" key="2">
    <source>
    </source>
</evidence>
<evidence type="ECO:0000305" key="3"/>
<accession>P11465</accession>
<accession>Q8TCD9</accession>
<accession>Q9UEA4</accession>
<accession>Q9UQ78</accession>
<dbReference type="EMBL" id="M20882">
    <property type="protein sequence ID" value="AAA52604.1"/>
    <property type="molecule type" value="mRNA"/>
</dbReference>
<dbReference type="EMBL" id="AC005791">
    <property type="protein sequence ID" value="AAC62831.1"/>
    <property type="molecule type" value="Genomic_DNA"/>
</dbReference>
<dbReference type="EMBL" id="AC024077">
    <property type="status" value="NOT_ANNOTATED_CDS"/>
    <property type="molecule type" value="Genomic_DNA"/>
</dbReference>
<dbReference type="EMBL" id="BC022316">
    <property type="protein sequence ID" value="AAH22316.1"/>
    <property type="molecule type" value="mRNA"/>
</dbReference>
<dbReference type="EMBL" id="AH007518">
    <property type="protein sequence ID" value="AAD21021.1"/>
    <property type="molecule type" value="Genomic_DNA"/>
</dbReference>
<dbReference type="CCDS" id="CCDS12616.1"/>
<dbReference type="RefSeq" id="NP_112536.2">
    <property type="nucleotide sequence ID" value="NM_031246.4"/>
</dbReference>
<dbReference type="SMR" id="P11465"/>
<dbReference type="BioGRID" id="111645">
    <property type="interactions" value="2"/>
</dbReference>
<dbReference type="IntAct" id="P11465">
    <property type="interactions" value="1"/>
</dbReference>
<dbReference type="MINT" id="P11465"/>
<dbReference type="STRING" id="9606.ENSP00000385706"/>
<dbReference type="GlyCosmos" id="P11465">
    <property type="glycosylation" value="4 sites, No reported glycans"/>
</dbReference>
<dbReference type="GlyGen" id="P11465">
    <property type="glycosylation" value="6 sites, 1 O-linked glycan (1 site)"/>
</dbReference>
<dbReference type="iPTMnet" id="P11465"/>
<dbReference type="PhosphoSitePlus" id="P11465"/>
<dbReference type="BioMuta" id="PSG2"/>
<dbReference type="DMDM" id="108935879"/>
<dbReference type="MassIVE" id="P11465"/>
<dbReference type="PaxDb" id="9606-ENSP00000385706"/>
<dbReference type="PeptideAtlas" id="P11465"/>
<dbReference type="ProteomicsDB" id="52779"/>
<dbReference type="Antibodypedia" id="35051">
    <property type="antibodies" value="137 antibodies from 15 providers"/>
</dbReference>
<dbReference type="DNASU" id="5670"/>
<dbReference type="Ensembl" id="ENST00000406487.6">
    <property type="protein sequence ID" value="ENSP00000385706.1"/>
    <property type="gene ID" value="ENSG00000242221.9"/>
</dbReference>
<dbReference type="GeneID" id="5670"/>
<dbReference type="KEGG" id="hsa:5670"/>
<dbReference type="MANE-Select" id="ENST00000406487.6">
    <property type="protein sequence ID" value="ENSP00000385706.1"/>
    <property type="RefSeq nucleotide sequence ID" value="NM_031246.4"/>
    <property type="RefSeq protein sequence ID" value="NP_112536.2"/>
</dbReference>
<dbReference type="UCSC" id="uc002ovr.4">
    <property type="organism name" value="human"/>
</dbReference>
<dbReference type="AGR" id="HGNC:9519"/>
<dbReference type="CTD" id="5670"/>
<dbReference type="DisGeNET" id="5670"/>
<dbReference type="GeneCards" id="PSG2"/>
<dbReference type="HGNC" id="HGNC:9519">
    <property type="gene designation" value="PSG2"/>
</dbReference>
<dbReference type="HPA" id="ENSG00000242221">
    <property type="expression patterns" value="Tissue enriched (placenta)"/>
</dbReference>
<dbReference type="MIM" id="176391">
    <property type="type" value="gene"/>
</dbReference>
<dbReference type="neXtProt" id="NX_P11465"/>
<dbReference type="OpenTargets" id="ENSG00000242221"/>
<dbReference type="PharmGKB" id="PA33864"/>
<dbReference type="VEuPathDB" id="HostDB:ENSG00000242221"/>
<dbReference type="eggNOG" id="ENOG502RWY0">
    <property type="taxonomic scope" value="Eukaryota"/>
</dbReference>
<dbReference type="GeneTree" id="ENSGT01100000263479"/>
<dbReference type="HOGENOM" id="CLU_024555_2_0_1"/>
<dbReference type="InParanoid" id="P11465"/>
<dbReference type="OMA" id="RATAHKD"/>
<dbReference type="OrthoDB" id="6159398at2759"/>
<dbReference type="PAN-GO" id="P11465">
    <property type="GO annotations" value="2 GO annotations based on evolutionary models"/>
</dbReference>
<dbReference type="PhylomeDB" id="P11465"/>
<dbReference type="TreeFam" id="TF336859"/>
<dbReference type="PathwayCommons" id="P11465"/>
<dbReference type="Reactome" id="R-HSA-202733">
    <property type="pathway name" value="Cell surface interactions at the vascular wall"/>
</dbReference>
<dbReference type="SignaLink" id="P11465"/>
<dbReference type="BioGRID-ORCS" id="5670">
    <property type="hits" value="73 hits in 1045 CRISPR screens"/>
</dbReference>
<dbReference type="GeneWiki" id="PSG2"/>
<dbReference type="GenomeRNAi" id="5670"/>
<dbReference type="Pharos" id="P11465">
    <property type="development level" value="Tbio"/>
</dbReference>
<dbReference type="PRO" id="PR:P11465"/>
<dbReference type="Proteomes" id="UP000005640">
    <property type="component" value="Chromosome 19"/>
</dbReference>
<dbReference type="RNAct" id="P11465">
    <property type="molecule type" value="protein"/>
</dbReference>
<dbReference type="Bgee" id="ENSG00000242221">
    <property type="expression patterns" value="Expressed in placenta and 80 other cell types or tissues"/>
</dbReference>
<dbReference type="ExpressionAtlas" id="P11465">
    <property type="expression patterns" value="baseline and differential"/>
</dbReference>
<dbReference type="GO" id="GO:0009986">
    <property type="term" value="C:cell surface"/>
    <property type="evidence" value="ECO:0000318"/>
    <property type="project" value="GO_Central"/>
</dbReference>
<dbReference type="GO" id="GO:0005576">
    <property type="term" value="C:extracellular region"/>
    <property type="evidence" value="ECO:0007669"/>
    <property type="project" value="UniProtKB-SubCell"/>
</dbReference>
<dbReference type="GO" id="GO:0016477">
    <property type="term" value="P:cell migration"/>
    <property type="evidence" value="ECO:0000303"/>
    <property type="project" value="UniProtKB"/>
</dbReference>
<dbReference type="GO" id="GO:0007565">
    <property type="term" value="P:female pregnancy"/>
    <property type="evidence" value="ECO:0000303"/>
    <property type="project" value="UniProtKB"/>
</dbReference>
<dbReference type="GO" id="GO:0007157">
    <property type="term" value="P:heterophilic cell-cell adhesion via plasma membrane cell adhesion molecules"/>
    <property type="evidence" value="ECO:0000318"/>
    <property type="project" value="GO_Central"/>
</dbReference>
<dbReference type="CDD" id="cd20948">
    <property type="entry name" value="IgC2_CEACAM5-like"/>
    <property type="match status" value="1"/>
</dbReference>
<dbReference type="CDD" id="cd05740">
    <property type="entry name" value="IgI_hCEACAM_2_4_6_like"/>
    <property type="match status" value="1"/>
</dbReference>
<dbReference type="CDD" id="cd05774">
    <property type="entry name" value="IgV_CEACAM_D1"/>
    <property type="match status" value="1"/>
</dbReference>
<dbReference type="FunFam" id="2.60.40.10:FF:000340">
    <property type="entry name" value="Carcinoembryonic antigen-related cell adhesion molecule 1"/>
    <property type="match status" value="1"/>
</dbReference>
<dbReference type="FunFam" id="2.60.40.10:FF:000517">
    <property type="entry name" value="Carcinoembryonic antigen-related cell adhesion molecule 1"/>
    <property type="match status" value="1"/>
</dbReference>
<dbReference type="FunFam" id="2.60.40.10:FF:000244">
    <property type="entry name" value="carcinoembryonic antigen-related cell adhesion molecule 16"/>
    <property type="match status" value="1"/>
</dbReference>
<dbReference type="Gene3D" id="2.60.40.10">
    <property type="entry name" value="Immunoglobulins"/>
    <property type="match status" value="3"/>
</dbReference>
<dbReference type="InterPro" id="IPR050831">
    <property type="entry name" value="CEA_cell_adhesion"/>
</dbReference>
<dbReference type="InterPro" id="IPR007110">
    <property type="entry name" value="Ig-like_dom"/>
</dbReference>
<dbReference type="InterPro" id="IPR036179">
    <property type="entry name" value="Ig-like_dom_sf"/>
</dbReference>
<dbReference type="InterPro" id="IPR013783">
    <property type="entry name" value="Ig-like_fold"/>
</dbReference>
<dbReference type="InterPro" id="IPR003599">
    <property type="entry name" value="Ig_sub"/>
</dbReference>
<dbReference type="InterPro" id="IPR003598">
    <property type="entry name" value="Ig_sub2"/>
</dbReference>
<dbReference type="InterPro" id="IPR013106">
    <property type="entry name" value="Ig_V-set"/>
</dbReference>
<dbReference type="PANTHER" id="PTHR44427">
    <property type="entry name" value="CARCINOEMBRYONIC ANTIGEN-RELATED CELL ADHESION MOLECULE 19"/>
    <property type="match status" value="1"/>
</dbReference>
<dbReference type="PANTHER" id="PTHR44427:SF32">
    <property type="entry name" value="IG-LIKE DOMAIN-CONTAINING PROTEIN"/>
    <property type="match status" value="1"/>
</dbReference>
<dbReference type="Pfam" id="PF13895">
    <property type="entry name" value="Ig_2"/>
    <property type="match status" value="1"/>
</dbReference>
<dbReference type="Pfam" id="PF13927">
    <property type="entry name" value="Ig_3"/>
    <property type="match status" value="1"/>
</dbReference>
<dbReference type="Pfam" id="PF07686">
    <property type="entry name" value="V-set"/>
    <property type="match status" value="1"/>
</dbReference>
<dbReference type="SMART" id="SM00409">
    <property type="entry name" value="IG"/>
    <property type="match status" value="3"/>
</dbReference>
<dbReference type="SMART" id="SM00408">
    <property type="entry name" value="IGc2"/>
    <property type="match status" value="2"/>
</dbReference>
<dbReference type="SUPFAM" id="SSF48726">
    <property type="entry name" value="Immunoglobulin"/>
    <property type="match status" value="3"/>
</dbReference>
<dbReference type="PROSITE" id="PS50835">
    <property type="entry name" value="IG_LIKE"/>
    <property type="match status" value="2"/>
</dbReference>
<protein>
    <recommendedName>
        <fullName>Pregnancy-specific beta-1-glycoprotein 2</fullName>
        <shortName>PS-beta-G-2</shortName>
        <shortName>PSBG-2</shortName>
        <shortName>Pregnancy-specific glycoprotein 2</shortName>
    </recommendedName>
    <alternativeName>
        <fullName>Pregnancy-specific beta-1 glycoprotein E</fullName>
        <shortName>PS-beta-E</shortName>
    </alternativeName>
</protein>
<organism>
    <name type="scientific">Homo sapiens</name>
    <name type="common">Human</name>
    <dbReference type="NCBI Taxonomy" id="9606"/>
    <lineage>
        <taxon>Eukaryota</taxon>
        <taxon>Metazoa</taxon>
        <taxon>Chordata</taxon>
        <taxon>Craniata</taxon>
        <taxon>Vertebrata</taxon>
        <taxon>Euteleostomi</taxon>
        <taxon>Mammalia</taxon>
        <taxon>Eutheria</taxon>
        <taxon>Euarchontoglires</taxon>
        <taxon>Primates</taxon>
        <taxon>Haplorrhini</taxon>
        <taxon>Catarrhini</taxon>
        <taxon>Hominidae</taxon>
        <taxon>Homo</taxon>
    </lineage>
</organism>
<name>PSG2_HUMAN</name>
<comment type="subcellular location">
    <subcellularLocation>
        <location evidence="3">Secreted</location>
    </subcellularLocation>
</comment>
<comment type="similarity">
    <text evidence="3">Belongs to the immunoglobulin superfamily. CEA family.</text>
</comment>
<gene>
    <name type="primary">PSG2</name>
    <name type="synonym">PSBG2</name>
</gene>
<feature type="signal peptide">
    <location>
        <begin position="1"/>
        <end position="34"/>
    </location>
</feature>
<feature type="chain" id="PRO_0000014909" description="Pregnancy-specific beta-1-glycoprotein 2">
    <location>
        <begin position="35"/>
        <end position="335"/>
    </location>
</feature>
<feature type="domain" description="Ig-like V-type">
    <location>
        <begin position="35"/>
        <end position="144"/>
    </location>
</feature>
<feature type="domain" description="Ig-like C2-type 1">
    <location>
        <begin position="147"/>
        <end position="234"/>
    </location>
</feature>
<feature type="domain" description="Ig-like C2-type 2">
    <location>
        <begin position="239"/>
        <end position="317"/>
    </location>
</feature>
<feature type="glycosylation site" description="N-linked (GlcNAc...) asparagine" evidence="1">
    <location>
        <position position="61"/>
    </location>
</feature>
<feature type="glycosylation site" description="N-linked (GlcNAc...) asparagine" evidence="1">
    <location>
        <position position="104"/>
    </location>
</feature>
<feature type="glycosylation site" description="N-linked (GlcNAc...) asparagine" evidence="1">
    <location>
        <position position="111"/>
    </location>
</feature>
<feature type="glycosylation site" description="N-linked (GlcNAc...) asparagine" evidence="1">
    <location>
        <position position="199"/>
    </location>
</feature>
<feature type="disulfide bond" evidence="3">
    <location>
        <begin position="169"/>
        <end position="217"/>
    </location>
</feature>
<feature type="disulfide bond" evidence="3">
    <location>
        <begin position="261"/>
        <end position="301"/>
    </location>
</feature>
<feature type="sequence variant" id="VAR_016039" description="In dbSNP:rs3887660." evidence="2">
    <original>V</original>
    <variation>L</variation>
    <location>
        <position position="20"/>
    </location>
</feature>
<feature type="sequence variant" id="VAR_049918" description="In dbSNP:rs16976431.">
    <original>T</original>
    <variation>A</variation>
    <location>
        <position position="176"/>
    </location>
</feature>
<feature type="sequence variant" id="VAR_049919" description="In dbSNP:rs1058086.">
    <original>Q</original>
    <variation>L</variation>
    <location>
        <position position="179"/>
    </location>
</feature>
<feature type="sequence variant" id="VAR_049920" description="In dbSNP:rs1064937.">
    <original>T</original>
    <variation>R</variation>
    <location>
        <position position="335"/>
    </location>
</feature>
<feature type="sequence conflict" description="In Ref. 1; AAA52604." evidence="3" ref="1">
    <original>E</original>
    <variation>Q</variation>
    <location>
        <position position="310"/>
    </location>
</feature>
<sequence length="335" mass="37216">MGPLSAPPCTEHIKWKGLLVTASLLNFWNLPTTAQVTIEAQPPKVSEGKDVLLLVHNLPQNLTGYIWYKGQIRDLYHYITSYVVDGQIIIYGPAYSGRETAYSNASLLIQNVTREDAGSYTLHIIKRGDGTRGVTGYFTFTLYLETPKPSISSSNLNPREAMETVILTCDPETPDTSYQWWMNGQSLPMTHRFQLSETNRTLFLFGVTKYTAGPYECEIRNSGSASRSDPVTLNLLHGPDLPRIHPSYTNYRSGDNLYLSCFANSNPPAQYSWTINGKFQQSGQNLFIPQITTKHSGLYVCSVRNSATGEESSTSLTVKVSASTRIGLLPLLNPT</sequence>
<proteinExistence type="evidence at protein level"/>
<keyword id="KW-1015">Disulfide bond</keyword>
<keyword id="KW-0325">Glycoprotein</keyword>
<keyword id="KW-0393">Immunoglobulin domain</keyword>
<keyword id="KW-1267">Proteomics identification</keyword>
<keyword id="KW-1185">Reference proteome</keyword>
<keyword id="KW-0677">Repeat</keyword>
<keyword id="KW-0964">Secreted</keyword>
<keyword id="KW-0732">Signal</keyword>
<reference key="1">
    <citation type="journal article" date="1988" name="Biochem. Biophys. Res. Commun.">
        <title>The human pregnancy-specific beta 1-glycoprotein (PS beta G) and the carcinoembryonic antigen (CEA)-related proteins are members of the same multigene family.</title>
        <authorList>
            <person name="Streydio C."/>
            <person name="Lacka K."/>
            <person name="Swillens S."/>
            <person name="Vassart G."/>
        </authorList>
    </citation>
    <scope>NUCLEOTIDE SEQUENCE [MRNA]</scope>
</reference>
<reference key="2">
    <citation type="journal article" date="2004" name="Nature">
        <title>The DNA sequence and biology of human chromosome 19.</title>
        <authorList>
            <person name="Grimwood J."/>
            <person name="Gordon L.A."/>
            <person name="Olsen A.S."/>
            <person name="Terry A."/>
            <person name="Schmutz J."/>
            <person name="Lamerdin J.E."/>
            <person name="Hellsten U."/>
            <person name="Goodstein D."/>
            <person name="Couronne O."/>
            <person name="Tran-Gyamfi M."/>
            <person name="Aerts A."/>
            <person name="Altherr M."/>
            <person name="Ashworth L."/>
            <person name="Bajorek E."/>
            <person name="Black S."/>
            <person name="Branscomb E."/>
            <person name="Caenepeel S."/>
            <person name="Carrano A.V."/>
            <person name="Caoile C."/>
            <person name="Chan Y.M."/>
            <person name="Christensen M."/>
            <person name="Cleland C.A."/>
            <person name="Copeland A."/>
            <person name="Dalin E."/>
            <person name="Dehal P."/>
            <person name="Denys M."/>
            <person name="Detter J.C."/>
            <person name="Escobar J."/>
            <person name="Flowers D."/>
            <person name="Fotopulos D."/>
            <person name="Garcia C."/>
            <person name="Georgescu A.M."/>
            <person name="Glavina T."/>
            <person name="Gomez M."/>
            <person name="Gonzales E."/>
            <person name="Groza M."/>
            <person name="Hammon N."/>
            <person name="Hawkins T."/>
            <person name="Haydu L."/>
            <person name="Ho I."/>
            <person name="Huang W."/>
            <person name="Israni S."/>
            <person name="Jett J."/>
            <person name="Kadner K."/>
            <person name="Kimball H."/>
            <person name="Kobayashi A."/>
            <person name="Larionov V."/>
            <person name="Leem S.-H."/>
            <person name="Lopez F."/>
            <person name="Lou Y."/>
            <person name="Lowry S."/>
            <person name="Malfatti S."/>
            <person name="Martinez D."/>
            <person name="McCready P.M."/>
            <person name="Medina C."/>
            <person name="Morgan J."/>
            <person name="Nelson K."/>
            <person name="Nolan M."/>
            <person name="Ovcharenko I."/>
            <person name="Pitluck S."/>
            <person name="Pollard M."/>
            <person name="Popkie A.P."/>
            <person name="Predki P."/>
            <person name="Quan G."/>
            <person name="Ramirez L."/>
            <person name="Rash S."/>
            <person name="Retterer J."/>
            <person name="Rodriguez A."/>
            <person name="Rogers S."/>
            <person name="Salamov A."/>
            <person name="Salazar A."/>
            <person name="She X."/>
            <person name="Smith D."/>
            <person name="Slezak T."/>
            <person name="Solovyev V."/>
            <person name="Thayer N."/>
            <person name="Tice H."/>
            <person name="Tsai M."/>
            <person name="Ustaszewska A."/>
            <person name="Vo N."/>
            <person name="Wagner M."/>
            <person name="Wheeler J."/>
            <person name="Wu K."/>
            <person name="Xie G."/>
            <person name="Yang J."/>
            <person name="Dubchak I."/>
            <person name="Furey T.S."/>
            <person name="DeJong P."/>
            <person name="Dickson M."/>
            <person name="Gordon D."/>
            <person name="Eichler E.E."/>
            <person name="Pennacchio L.A."/>
            <person name="Richardson P."/>
            <person name="Stubbs L."/>
            <person name="Rokhsar D.S."/>
            <person name="Myers R.M."/>
            <person name="Rubin E.M."/>
            <person name="Lucas S.M."/>
        </authorList>
    </citation>
    <scope>NUCLEOTIDE SEQUENCE [LARGE SCALE GENOMIC DNA]</scope>
</reference>
<reference key="3">
    <citation type="journal article" date="2004" name="Genome Res.">
        <title>The status, quality, and expansion of the NIH full-length cDNA project: the Mammalian Gene Collection (MGC).</title>
        <authorList>
            <consortium name="The MGC Project Team"/>
        </authorList>
    </citation>
    <scope>NUCLEOTIDE SEQUENCE [LARGE SCALE MRNA]</scope>
    <scope>VARIANT LEU-20</scope>
    <source>
        <tissue>Placenta</tissue>
    </source>
</reference>
<reference key="4">
    <citation type="submission" date="1998-11" db="EMBL/GenBank/DDBJ databases">
        <title>Characterization of upstream promotor region, exon1 and exon2 of the PSG gene family.</title>
        <authorList>
            <person name="Fraengsmyr L."/>
            <person name="Teglund S."/>
            <person name="Israelsson A."/>
            <person name="Hammarstroem S."/>
        </authorList>
    </citation>
    <scope>NUCLEOTIDE SEQUENCE [GENOMIC DNA] OF 1-143</scope>
</reference>